<dbReference type="EMBL" id="CP000923">
    <property type="protein sequence ID" value="ABY92170.1"/>
    <property type="molecule type" value="Genomic_DNA"/>
</dbReference>
<dbReference type="RefSeq" id="WP_003868561.1">
    <property type="nucleotide sequence ID" value="NC_010320.1"/>
</dbReference>
<dbReference type="SMR" id="B0K5P4"/>
<dbReference type="KEGG" id="tex:Teth514_0868"/>
<dbReference type="HOGENOM" id="CLU_041575_5_2_9"/>
<dbReference type="Proteomes" id="UP000002155">
    <property type="component" value="Chromosome"/>
</dbReference>
<dbReference type="GO" id="GO:1990904">
    <property type="term" value="C:ribonucleoprotein complex"/>
    <property type="evidence" value="ECO:0007669"/>
    <property type="project" value="UniProtKB-KW"/>
</dbReference>
<dbReference type="GO" id="GO:0005840">
    <property type="term" value="C:ribosome"/>
    <property type="evidence" value="ECO:0007669"/>
    <property type="project" value="UniProtKB-KW"/>
</dbReference>
<dbReference type="GO" id="GO:0019843">
    <property type="term" value="F:rRNA binding"/>
    <property type="evidence" value="ECO:0007669"/>
    <property type="project" value="UniProtKB-UniRule"/>
</dbReference>
<dbReference type="GO" id="GO:0003735">
    <property type="term" value="F:structural constituent of ribosome"/>
    <property type="evidence" value="ECO:0007669"/>
    <property type="project" value="InterPro"/>
</dbReference>
<dbReference type="GO" id="GO:0006412">
    <property type="term" value="P:translation"/>
    <property type="evidence" value="ECO:0007669"/>
    <property type="project" value="UniProtKB-UniRule"/>
</dbReference>
<dbReference type="Gene3D" id="3.40.1370.10">
    <property type="match status" value="1"/>
</dbReference>
<dbReference type="HAMAP" id="MF_01328_B">
    <property type="entry name" value="Ribosomal_uL4_B"/>
    <property type="match status" value="1"/>
</dbReference>
<dbReference type="InterPro" id="IPR002136">
    <property type="entry name" value="Ribosomal_uL4"/>
</dbReference>
<dbReference type="InterPro" id="IPR013005">
    <property type="entry name" value="Ribosomal_uL4-like"/>
</dbReference>
<dbReference type="InterPro" id="IPR023574">
    <property type="entry name" value="Ribosomal_uL4_dom_sf"/>
</dbReference>
<dbReference type="NCBIfam" id="TIGR03953">
    <property type="entry name" value="rplD_bact"/>
    <property type="match status" value="1"/>
</dbReference>
<dbReference type="PANTHER" id="PTHR10746">
    <property type="entry name" value="50S RIBOSOMAL PROTEIN L4"/>
    <property type="match status" value="1"/>
</dbReference>
<dbReference type="PANTHER" id="PTHR10746:SF6">
    <property type="entry name" value="LARGE RIBOSOMAL SUBUNIT PROTEIN UL4M"/>
    <property type="match status" value="1"/>
</dbReference>
<dbReference type="Pfam" id="PF00573">
    <property type="entry name" value="Ribosomal_L4"/>
    <property type="match status" value="1"/>
</dbReference>
<dbReference type="SUPFAM" id="SSF52166">
    <property type="entry name" value="Ribosomal protein L4"/>
    <property type="match status" value="1"/>
</dbReference>
<keyword id="KW-0687">Ribonucleoprotein</keyword>
<keyword id="KW-0689">Ribosomal protein</keyword>
<keyword id="KW-0694">RNA-binding</keyword>
<keyword id="KW-0699">rRNA-binding</keyword>
<sequence>MPKVAVYNVKGEQVGEIELKDSVFGVPVNVPVMHEAVLNYLANQRQGTHSTKTRGEVRGGGRKPWRQKGTGRARQGSIRAPQWIKGGIVFGPKPRDYSYKLPKKVKRLALKSALSSKVRDNEIIVLDEFKLDQPKTKKVVELLKNFNVDSALIVVPEGEKNVELSARNIPGVKTLYANYLNTYDILKYDKFIITKDAVGIVEEVYA</sequence>
<comment type="function">
    <text evidence="1">One of the primary rRNA binding proteins, this protein initially binds near the 5'-end of the 23S rRNA. It is important during the early stages of 50S assembly. It makes multiple contacts with different domains of the 23S rRNA in the assembled 50S subunit and ribosome.</text>
</comment>
<comment type="function">
    <text evidence="1">Forms part of the polypeptide exit tunnel.</text>
</comment>
<comment type="subunit">
    <text evidence="1">Part of the 50S ribosomal subunit.</text>
</comment>
<comment type="similarity">
    <text evidence="1">Belongs to the universal ribosomal protein uL4 family.</text>
</comment>
<feature type="chain" id="PRO_1000142199" description="Large ribosomal subunit protein uL4">
    <location>
        <begin position="1"/>
        <end position="206"/>
    </location>
</feature>
<feature type="region of interest" description="Disordered" evidence="2">
    <location>
        <begin position="45"/>
        <end position="75"/>
    </location>
</feature>
<feature type="compositionally biased region" description="Basic residues" evidence="2">
    <location>
        <begin position="60"/>
        <end position="71"/>
    </location>
</feature>
<protein>
    <recommendedName>
        <fullName evidence="1">Large ribosomal subunit protein uL4</fullName>
    </recommendedName>
    <alternativeName>
        <fullName evidence="3">50S ribosomal protein L4</fullName>
    </alternativeName>
</protein>
<evidence type="ECO:0000255" key="1">
    <source>
        <dbReference type="HAMAP-Rule" id="MF_01328"/>
    </source>
</evidence>
<evidence type="ECO:0000256" key="2">
    <source>
        <dbReference type="SAM" id="MobiDB-lite"/>
    </source>
</evidence>
<evidence type="ECO:0000305" key="3"/>
<reference key="1">
    <citation type="submission" date="2008-01" db="EMBL/GenBank/DDBJ databases">
        <title>Complete sequence of Thermoanaerobacter sp. X514.</title>
        <authorList>
            <consortium name="US DOE Joint Genome Institute"/>
            <person name="Copeland A."/>
            <person name="Lucas S."/>
            <person name="Lapidus A."/>
            <person name="Barry K."/>
            <person name="Glavina del Rio T."/>
            <person name="Dalin E."/>
            <person name="Tice H."/>
            <person name="Pitluck S."/>
            <person name="Bruce D."/>
            <person name="Goodwin L."/>
            <person name="Saunders E."/>
            <person name="Brettin T."/>
            <person name="Detter J.C."/>
            <person name="Han C."/>
            <person name="Schmutz J."/>
            <person name="Larimer F."/>
            <person name="Land M."/>
            <person name="Hauser L."/>
            <person name="Kyrpides N."/>
            <person name="Kim E."/>
            <person name="Hemme C."/>
            <person name="Fields M.W."/>
            <person name="He Z."/>
            <person name="Zhou J."/>
            <person name="Richardson P."/>
        </authorList>
    </citation>
    <scope>NUCLEOTIDE SEQUENCE [LARGE SCALE GENOMIC DNA]</scope>
    <source>
        <strain>X514</strain>
    </source>
</reference>
<name>RL4_THEPX</name>
<gene>
    <name evidence="1" type="primary">rplD</name>
    <name type="ordered locus">Teth514_0868</name>
</gene>
<accession>B0K5P4</accession>
<proteinExistence type="inferred from homology"/>
<organism>
    <name type="scientific">Thermoanaerobacter sp. (strain X514)</name>
    <dbReference type="NCBI Taxonomy" id="399726"/>
    <lineage>
        <taxon>Bacteria</taxon>
        <taxon>Bacillati</taxon>
        <taxon>Bacillota</taxon>
        <taxon>Clostridia</taxon>
        <taxon>Thermoanaerobacterales</taxon>
        <taxon>Thermoanaerobacteraceae</taxon>
        <taxon>Thermoanaerobacter</taxon>
    </lineage>
</organism>